<name>INS1_CONKI</name>
<reference key="1">
    <citation type="journal article" date="2019" name="Elife">
        <title>Fish-hunting cone snail venoms are a rich source of minimized ligands of the vertebrate insulin receptor.</title>
        <authorList>
            <person name="Ahorukomeye P."/>
            <person name="Disotuar M.M."/>
            <person name="Gajewiak J."/>
            <person name="Karanth S."/>
            <person name="Watkins M."/>
            <person name="Robinson S.D."/>
            <person name="Florez Salcedo P."/>
            <person name="Smith N.A."/>
            <person name="Smith B.J."/>
            <person name="Schlegel A."/>
            <person name="Forbes B.E."/>
            <person name="Olivera B."/>
            <person name="Hung-Chieh Chou D."/>
            <person name="Safavi-Hemami H."/>
        </authorList>
    </citation>
    <scope>NUCLEOTIDE SEQUENCE [MRNA]</scope>
    <scope>FUNCTION</scope>
    <scope>SYNTHESIS OF 29-56 AND 84-107</scope>
    <scope>3D-STRUCTURE MODELING IN COMPLEX WITH HUMAN INSULIN RECEPTOR</scope>
</reference>
<protein>
    <recommendedName>
        <fullName evidence="4">Con-Ins K1</fullName>
    </recommendedName>
    <alternativeName>
        <fullName evidence="4">Insulin K1</fullName>
    </alternativeName>
    <component>
        <recommendedName>
            <fullName evidence="4">Con-Ins K1 B chain</fullName>
        </recommendedName>
    </component>
    <component>
        <recommendedName>
            <fullName evidence="4">Con-Ins K1 A chain</fullName>
        </recommendedName>
    </component>
</protein>
<organism>
    <name type="scientific">Conus kinoshitai</name>
    <name type="common">Kinoshita's cone</name>
    <dbReference type="NCBI Taxonomy" id="376876"/>
    <lineage>
        <taxon>Eukaryota</taxon>
        <taxon>Metazoa</taxon>
        <taxon>Spiralia</taxon>
        <taxon>Lophotrochozoa</taxon>
        <taxon>Mollusca</taxon>
        <taxon>Gastropoda</taxon>
        <taxon>Caenogastropoda</taxon>
        <taxon>Neogastropoda</taxon>
        <taxon>Conoidea</taxon>
        <taxon>Conidae</taxon>
        <taxon>Conus</taxon>
        <taxon>Afonsoconus</taxon>
    </lineage>
</organism>
<proteinExistence type="inferred from homology"/>
<dbReference type="EMBL" id="MH879033">
    <property type="protein sequence ID" value="AZS18883.1"/>
    <property type="molecule type" value="mRNA"/>
</dbReference>
<dbReference type="SMR" id="A0A3S9V8L7"/>
<dbReference type="GO" id="GO:0005576">
    <property type="term" value="C:extracellular region"/>
    <property type="evidence" value="ECO:0007669"/>
    <property type="project" value="UniProtKB-SubCell"/>
</dbReference>
<dbReference type="GO" id="GO:0005179">
    <property type="term" value="F:hormone activity"/>
    <property type="evidence" value="ECO:0007669"/>
    <property type="project" value="UniProtKB-KW"/>
</dbReference>
<dbReference type="GO" id="GO:0090729">
    <property type="term" value="F:toxin activity"/>
    <property type="evidence" value="ECO:0007669"/>
    <property type="project" value="UniProtKB-KW"/>
</dbReference>
<dbReference type="GO" id="GO:0006006">
    <property type="term" value="P:glucose metabolic process"/>
    <property type="evidence" value="ECO:0007669"/>
    <property type="project" value="UniProtKB-KW"/>
</dbReference>
<dbReference type="Gene3D" id="1.10.100.10">
    <property type="entry name" value="Insulin-like"/>
    <property type="match status" value="1"/>
</dbReference>
<dbReference type="InterPro" id="IPR016179">
    <property type="entry name" value="Insulin-like"/>
</dbReference>
<dbReference type="InterPro" id="IPR036438">
    <property type="entry name" value="Insulin-like_sf"/>
</dbReference>
<dbReference type="InterPro" id="IPR016724">
    <property type="entry name" value="Insulin-rel_pep"/>
</dbReference>
<dbReference type="InterPro" id="IPR022353">
    <property type="entry name" value="Insulin_CS"/>
</dbReference>
<dbReference type="InterPro" id="IPR022352">
    <property type="entry name" value="Insulin_family"/>
</dbReference>
<dbReference type="Pfam" id="PF00049">
    <property type="entry name" value="Insulin"/>
    <property type="match status" value="1"/>
</dbReference>
<dbReference type="PIRSF" id="PIRSF018431">
    <property type="entry name" value="Molluscan_insulin_rel_peptide"/>
    <property type="match status" value="1"/>
</dbReference>
<dbReference type="PRINTS" id="PR00276">
    <property type="entry name" value="INSULINFAMLY"/>
</dbReference>
<dbReference type="SMART" id="SM00078">
    <property type="entry name" value="IlGF"/>
    <property type="match status" value="1"/>
</dbReference>
<dbReference type="SUPFAM" id="SSF56994">
    <property type="entry name" value="Insulin-like"/>
    <property type="match status" value="1"/>
</dbReference>
<dbReference type="PROSITE" id="PS00262">
    <property type="entry name" value="INSULIN"/>
    <property type="match status" value="1"/>
</dbReference>
<sequence>MTTSSYFLLVALGLLLYVCQSSFGSPHTSDSGTTLVRRRLCGSELVTYLGELCLGNRKRRGFPSMLKARAKRNEAFLLQRDGRGIVEDCCYNDCTDEKLKEYCHTLQG</sequence>
<keyword id="KW-0027">Amidation</keyword>
<keyword id="KW-0119">Carbohydrate metabolism</keyword>
<keyword id="KW-0165">Cleavage on pair of basic residues</keyword>
<keyword id="KW-1015">Disulfide bond</keyword>
<keyword id="KW-0301">Gamma-carboxyglutamic acid</keyword>
<keyword id="KW-0313">Glucose metabolism</keyword>
<keyword id="KW-0372">Hormone</keyword>
<keyword id="KW-0964">Secreted</keyword>
<keyword id="KW-0732">Signal</keyword>
<keyword id="KW-0800">Toxin</keyword>
<evidence type="ECO:0000250" key="1">
    <source>
        <dbReference type="UniProtKB" id="A0A0B5AC95"/>
    </source>
</evidence>
<evidence type="ECO:0000255" key="2"/>
<evidence type="ECO:0000269" key="3">
    <source>
    </source>
</evidence>
<evidence type="ECO:0000303" key="4">
    <source>
    </source>
</evidence>
<evidence type="ECO:0000305" key="5"/>
<accession>A0A3S9V8L7</accession>
<comment type="function">
    <text evidence="1 3">This venom insulin, from a fish-hunting cone snail, facilitates prey capture by rapidly inducing hypoglycemic shock (PubMed:30747102). It is one of the smallest known insulin found in nature and lacks the C-terminal segment of the B chain that, in human insulin, mediates engagement of the insulin receptor (INSR) and assembly of the hormone's hexameric storage form (By similarity). Despite lacking this segment, it both binds and activates human insulin receptor (long isoform (HIR-B)) with a moderate potency (EC(50)=30.45 nM) (PubMed:30747102). In vivo, intraperitoneal injection of this peptide into zebrafish lowers blood glucose with a lower potency than human insulin (PubMed:30747102). In addition, when applied to water, this peptide reduces overall locomotor activity of zebrafish larvae, observed as a significant decrease in the percentage of time spent swimming and movement frequency (By similarity). When tested on a mouse model of diabetes, this insulin also lowers blood glucose with a 20-fold lower potency than human insulin (PubMed:30747102).</text>
</comment>
<comment type="subunit">
    <text evidence="1">Heterodimer of A and B chains; disulfide-linked.</text>
</comment>
<comment type="subcellular location">
    <subcellularLocation>
        <location evidence="1">Secreted</location>
    </subcellularLocation>
</comment>
<comment type="tissue specificity">
    <text evidence="1">Expressed by the venom gland.</text>
</comment>
<comment type="similarity">
    <text evidence="5">Belongs to the insulin family.</text>
</comment>
<feature type="signal peptide" evidence="2">
    <location>
        <begin position="1"/>
        <end position="24"/>
    </location>
</feature>
<feature type="propeptide" id="PRO_0000452031" evidence="1">
    <location>
        <begin position="25"/>
        <end position="28"/>
    </location>
</feature>
<feature type="peptide" id="PRO_5019276852" description="Con-Ins K1 B chain" evidence="1">
    <location>
        <begin position="29"/>
        <end position="56"/>
    </location>
</feature>
<feature type="propeptide" id="PRO_0000452032" description="C peptide" evidence="1">
    <location>
        <begin position="57"/>
        <end position="83"/>
    </location>
</feature>
<feature type="peptide" id="PRO_0000452033" description="Con-Ins K1 A chain" evidence="1">
    <location>
        <begin position="84"/>
        <end position="107"/>
    </location>
</feature>
<feature type="modified residue" description="4-carboxyglutamate" evidence="1">
    <location>
        <position position="44"/>
    </location>
</feature>
<feature type="modified residue" description="4-carboxyglutamate" evidence="1">
    <location>
        <position position="87"/>
    </location>
</feature>
<feature type="modified residue" description="Glutamine amide" evidence="1">
    <location>
        <position position="107"/>
    </location>
</feature>
<feature type="disulfide bond" description="Interchain (between B and A chains)" evidence="1">
    <location>
        <begin position="41"/>
        <end position="90"/>
    </location>
</feature>
<feature type="disulfide bond" description="Interchain (between B and A chains)" evidence="1">
    <location>
        <begin position="53"/>
        <end position="103"/>
    </location>
</feature>
<feature type="disulfide bond" evidence="1">
    <location>
        <begin position="89"/>
        <end position="94"/>
    </location>
</feature>